<feature type="chain" id="PRO_0000110941" description="Aspartate--tRNA ligase">
    <location>
        <begin position="1"/>
        <end position="588"/>
    </location>
</feature>
<feature type="region of interest" description="Aspartate" evidence="1">
    <location>
        <begin position="201"/>
        <end position="204"/>
    </location>
</feature>
<feature type="binding site" evidence="1">
    <location>
        <position position="177"/>
    </location>
    <ligand>
        <name>L-aspartate</name>
        <dbReference type="ChEBI" id="CHEBI:29991"/>
    </ligand>
</feature>
<feature type="binding site" evidence="1">
    <location>
        <begin position="223"/>
        <end position="225"/>
    </location>
    <ligand>
        <name>ATP</name>
        <dbReference type="ChEBI" id="CHEBI:30616"/>
    </ligand>
</feature>
<feature type="binding site" evidence="1">
    <location>
        <position position="223"/>
    </location>
    <ligand>
        <name>L-aspartate</name>
        <dbReference type="ChEBI" id="CHEBI:29991"/>
    </ligand>
</feature>
<feature type="binding site" evidence="1">
    <location>
        <position position="232"/>
    </location>
    <ligand>
        <name>ATP</name>
        <dbReference type="ChEBI" id="CHEBI:30616"/>
    </ligand>
</feature>
<feature type="binding site" evidence="1">
    <location>
        <position position="451"/>
    </location>
    <ligand>
        <name>L-aspartate</name>
        <dbReference type="ChEBI" id="CHEBI:29991"/>
    </ligand>
</feature>
<feature type="binding site" evidence="1">
    <location>
        <position position="485"/>
    </location>
    <ligand>
        <name>ATP</name>
        <dbReference type="ChEBI" id="CHEBI:30616"/>
    </ligand>
</feature>
<feature type="binding site" evidence="1">
    <location>
        <position position="492"/>
    </location>
    <ligand>
        <name>L-aspartate</name>
        <dbReference type="ChEBI" id="CHEBI:29991"/>
    </ligand>
</feature>
<feature type="binding site" evidence="1">
    <location>
        <begin position="537"/>
        <end position="540"/>
    </location>
    <ligand>
        <name>ATP</name>
        <dbReference type="ChEBI" id="CHEBI:30616"/>
    </ligand>
</feature>
<keyword id="KW-0030">Aminoacyl-tRNA synthetase</keyword>
<keyword id="KW-0067">ATP-binding</keyword>
<keyword id="KW-0963">Cytoplasm</keyword>
<keyword id="KW-0436">Ligase</keyword>
<keyword id="KW-0547">Nucleotide-binding</keyword>
<keyword id="KW-0648">Protein biosynthesis</keyword>
<proteinExistence type="inferred from homology"/>
<protein>
    <recommendedName>
        <fullName evidence="1">Aspartate--tRNA ligase</fullName>
        <ecNumber evidence="1">6.1.1.12</ecNumber>
    </recommendedName>
    <alternativeName>
        <fullName evidence="1">Aspartyl-tRNA synthetase</fullName>
        <shortName evidence="1">AspRS</shortName>
    </alternativeName>
</protein>
<name>SYD_STAAC</name>
<comment type="function">
    <text evidence="1">Catalyzes the attachment of L-aspartate to tRNA(Asp) in a two-step reaction: L-aspartate is first activated by ATP to form Asp-AMP and then transferred to the acceptor end of tRNA(Asp).</text>
</comment>
<comment type="catalytic activity">
    <reaction evidence="1">
        <text>tRNA(Asp) + L-aspartate + ATP = L-aspartyl-tRNA(Asp) + AMP + diphosphate</text>
        <dbReference type="Rhea" id="RHEA:19649"/>
        <dbReference type="Rhea" id="RHEA-COMP:9660"/>
        <dbReference type="Rhea" id="RHEA-COMP:9678"/>
        <dbReference type="ChEBI" id="CHEBI:29991"/>
        <dbReference type="ChEBI" id="CHEBI:30616"/>
        <dbReference type="ChEBI" id="CHEBI:33019"/>
        <dbReference type="ChEBI" id="CHEBI:78442"/>
        <dbReference type="ChEBI" id="CHEBI:78516"/>
        <dbReference type="ChEBI" id="CHEBI:456215"/>
        <dbReference type="EC" id="6.1.1.12"/>
    </reaction>
</comment>
<comment type="subunit">
    <text evidence="1">Homodimer.</text>
</comment>
<comment type="subcellular location">
    <subcellularLocation>
        <location evidence="1">Cytoplasm</location>
    </subcellularLocation>
</comment>
<comment type="similarity">
    <text evidence="1">Belongs to the class-II aminoacyl-tRNA synthetase family. Type 1 subfamily.</text>
</comment>
<organism>
    <name type="scientific">Staphylococcus aureus (strain COL)</name>
    <dbReference type="NCBI Taxonomy" id="93062"/>
    <lineage>
        <taxon>Bacteria</taxon>
        <taxon>Bacillati</taxon>
        <taxon>Bacillota</taxon>
        <taxon>Bacilli</taxon>
        <taxon>Bacillales</taxon>
        <taxon>Staphylococcaceae</taxon>
        <taxon>Staphylococcus</taxon>
    </lineage>
</organism>
<dbReference type="EC" id="6.1.1.12" evidence="1"/>
<dbReference type="EMBL" id="CP000046">
    <property type="protein sequence ID" value="AAW36791.1"/>
    <property type="molecule type" value="Genomic_DNA"/>
</dbReference>
<dbReference type="RefSeq" id="WP_000044799.1">
    <property type="nucleotide sequence ID" value="NZ_JBGOFO010000003.1"/>
</dbReference>
<dbReference type="SMR" id="Q5HFD3"/>
<dbReference type="KEGG" id="sac:SACOL1685"/>
<dbReference type="HOGENOM" id="CLU_014330_3_2_9"/>
<dbReference type="Proteomes" id="UP000000530">
    <property type="component" value="Chromosome"/>
</dbReference>
<dbReference type="GO" id="GO:0005737">
    <property type="term" value="C:cytoplasm"/>
    <property type="evidence" value="ECO:0007669"/>
    <property type="project" value="UniProtKB-SubCell"/>
</dbReference>
<dbReference type="GO" id="GO:0004815">
    <property type="term" value="F:aspartate-tRNA ligase activity"/>
    <property type="evidence" value="ECO:0007669"/>
    <property type="project" value="UniProtKB-UniRule"/>
</dbReference>
<dbReference type="GO" id="GO:0005524">
    <property type="term" value="F:ATP binding"/>
    <property type="evidence" value="ECO:0007669"/>
    <property type="project" value="UniProtKB-UniRule"/>
</dbReference>
<dbReference type="GO" id="GO:0140096">
    <property type="term" value="F:catalytic activity, acting on a protein"/>
    <property type="evidence" value="ECO:0007669"/>
    <property type="project" value="UniProtKB-ARBA"/>
</dbReference>
<dbReference type="GO" id="GO:0003676">
    <property type="term" value="F:nucleic acid binding"/>
    <property type="evidence" value="ECO:0007669"/>
    <property type="project" value="InterPro"/>
</dbReference>
<dbReference type="GO" id="GO:0016740">
    <property type="term" value="F:transferase activity"/>
    <property type="evidence" value="ECO:0007669"/>
    <property type="project" value="UniProtKB-ARBA"/>
</dbReference>
<dbReference type="GO" id="GO:0006422">
    <property type="term" value="P:aspartyl-tRNA aminoacylation"/>
    <property type="evidence" value="ECO:0007669"/>
    <property type="project" value="UniProtKB-UniRule"/>
</dbReference>
<dbReference type="CDD" id="cd00777">
    <property type="entry name" value="AspRS_core"/>
    <property type="match status" value="1"/>
</dbReference>
<dbReference type="CDD" id="cd04317">
    <property type="entry name" value="EcAspRS_like_N"/>
    <property type="match status" value="1"/>
</dbReference>
<dbReference type="Gene3D" id="3.30.930.10">
    <property type="entry name" value="Bira Bifunctional Protein, Domain 2"/>
    <property type="match status" value="1"/>
</dbReference>
<dbReference type="Gene3D" id="3.30.1360.30">
    <property type="entry name" value="GAD-like domain"/>
    <property type="match status" value="1"/>
</dbReference>
<dbReference type="Gene3D" id="2.40.50.140">
    <property type="entry name" value="Nucleic acid-binding proteins"/>
    <property type="match status" value="1"/>
</dbReference>
<dbReference type="HAMAP" id="MF_00044">
    <property type="entry name" value="Asp_tRNA_synth_type1"/>
    <property type="match status" value="1"/>
</dbReference>
<dbReference type="InterPro" id="IPR004364">
    <property type="entry name" value="Aa-tRNA-synt_II"/>
</dbReference>
<dbReference type="InterPro" id="IPR006195">
    <property type="entry name" value="aa-tRNA-synth_II"/>
</dbReference>
<dbReference type="InterPro" id="IPR045864">
    <property type="entry name" value="aa-tRNA-synth_II/BPL/LPL"/>
</dbReference>
<dbReference type="InterPro" id="IPR004524">
    <property type="entry name" value="Asp-tRNA-ligase_1"/>
</dbReference>
<dbReference type="InterPro" id="IPR047089">
    <property type="entry name" value="Asp-tRNA-ligase_1_N"/>
</dbReference>
<dbReference type="InterPro" id="IPR002312">
    <property type="entry name" value="Asp/Asn-tRNA-synth_IIb"/>
</dbReference>
<dbReference type="InterPro" id="IPR047090">
    <property type="entry name" value="AspRS_core"/>
</dbReference>
<dbReference type="InterPro" id="IPR004115">
    <property type="entry name" value="GAD-like_sf"/>
</dbReference>
<dbReference type="InterPro" id="IPR029351">
    <property type="entry name" value="GAD_dom"/>
</dbReference>
<dbReference type="InterPro" id="IPR012340">
    <property type="entry name" value="NA-bd_OB-fold"/>
</dbReference>
<dbReference type="InterPro" id="IPR004365">
    <property type="entry name" value="NA-bd_OB_tRNA"/>
</dbReference>
<dbReference type="NCBIfam" id="TIGR00459">
    <property type="entry name" value="aspS_bact"/>
    <property type="match status" value="1"/>
</dbReference>
<dbReference type="NCBIfam" id="NF001750">
    <property type="entry name" value="PRK00476.1"/>
    <property type="match status" value="1"/>
</dbReference>
<dbReference type="PANTHER" id="PTHR22594:SF5">
    <property type="entry name" value="ASPARTATE--TRNA LIGASE, MITOCHONDRIAL"/>
    <property type="match status" value="1"/>
</dbReference>
<dbReference type="PANTHER" id="PTHR22594">
    <property type="entry name" value="ASPARTYL/LYSYL-TRNA SYNTHETASE"/>
    <property type="match status" value="1"/>
</dbReference>
<dbReference type="Pfam" id="PF02938">
    <property type="entry name" value="GAD"/>
    <property type="match status" value="1"/>
</dbReference>
<dbReference type="Pfam" id="PF00152">
    <property type="entry name" value="tRNA-synt_2"/>
    <property type="match status" value="1"/>
</dbReference>
<dbReference type="Pfam" id="PF01336">
    <property type="entry name" value="tRNA_anti-codon"/>
    <property type="match status" value="1"/>
</dbReference>
<dbReference type="PRINTS" id="PR01042">
    <property type="entry name" value="TRNASYNTHASP"/>
</dbReference>
<dbReference type="SUPFAM" id="SSF55681">
    <property type="entry name" value="Class II aaRS and biotin synthetases"/>
    <property type="match status" value="1"/>
</dbReference>
<dbReference type="SUPFAM" id="SSF55261">
    <property type="entry name" value="GAD domain-like"/>
    <property type="match status" value="1"/>
</dbReference>
<dbReference type="SUPFAM" id="SSF50249">
    <property type="entry name" value="Nucleic acid-binding proteins"/>
    <property type="match status" value="1"/>
</dbReference>
<dbReference type="PROSITE" id="PS50862">
    <property type="entry name" value="AA_TRNA_LIGASE_II"/>
    <property type="match status" value="1"/>
</dbReference>
<accession>Q5HFD3</accession>
<sequence length="588" mass="66599">MSKRTTYCGLVTEAFLGQEITLKGWVNNRRDLGGLIFVDLRDREGIVQVVFNPAFSEEALKIAETVRSEYVVEVQGTVTKRDPETVNPKIKTGQVEVQVTNIKVINKSETPPFSINEENVNVDENIRLKYRYLDLRRQELAQTFKMRHQITRSIRQYLDDEGFFDIETPVLTKSTPEGARDYLVPSRVHDGEFYALPQSPQLFKQLLMISGFDKYYQIVKCFRDEDLRADRQPEFTQVDIEMSFVDQEDVMQMGEEMLKKVVKEVKGVEINGAFPRMTYKEAMRRYGSDKPDTRFEMELIDVSQLGRDMDFKVFKDTVENDGEIKAIVAKGAAEQYTRKDMDALTEFVNIYGAKGLAWVKVVEDGLTGPIGRFFETENVETLLTLTGAEAGDLVMFVADKPNVVAQSLGALRVKLAKELGLIDETKLNFLWVTDWPLLEYDEDAKRYVAAHHPFTSPKEADIAKLGTAPEEAEANAYDIVLNGYELGGGSIRIHDGELQEKMFEVLGFTKEQAQEQFGFLLDAFKYGAPPHGGIALGLDRLVMLLTNRTNLRDTIAFPKTASATCLLTNAPGEVSDKQLEELSLRIRH</sequence>
<gene>
    <name evidence="1" type="primary">aspS</name>
    <name type="ordered locus">SACOL1685</name>
</gene>
<evidence type="ECO:0000255" key="1">
    <source>
        <dbReference type="HAMAP-Rule" id="MF_00044"/>
    </source>
</evidence>
<reference key="1">
    <citation type="journal article" date="2005" name="J. Bacteriol.">
        <title>Insights on evolution of virulence and resistance from the complete genome analysis of an early methicillin-resistant Staphylococcus aureus strain and a biofilm-producing methicillin-resistant Staphylococcus epidermidis strain.</title>
        <authorList>
            <person name="Gill S.R."/>
            <person name="Fouts D.E."/>
            <person name="Archer G.L."/>
            <person name="Mongodin E.F."/>
            <person name="DeBoy R.T."/>
            <person name="Ravel J."/>
            <person name="Paulsen I.T."/>
            <person name="Kolonay J.F."/>
            <person name="Brinkac L.M."/>
            <person name="Beanan M.J."/>
            <person name="Dodson R.J."/>
            <person name="Daugherty S.C."/>
            <person name="Madupu R."/>
            <person name="Angiuoli S.V."/>
            <person name="Durkin A.S."/>
            <person name="Haft D.H."/>
            <person name="Vamathevan J.J."/>
            <person name="Khouri H."/>
            <person name="Utterback T.R."/>
            <person name="Lee C."/>
            <person name="Dimitrov G."/>
            <person name="Jiang L."/>
            <person name="Qin H."/>
            <person name="Weidman J."/>
            <person name="Tran K."/>
            <person name="Kang K.H."/>
            <person name="Hance I.R."/>
            <person name="Nelson K.E."/>
            <person name="Fraser C.M."/>
        </authorList>
    </citation>
    <scope>NUCLEOTIDE SEQUENCE [LARGE SCALE GENOMIC DNA]</scope>
    <source>
        <strain>COL</strain>
    </source>
</reference>